<reference key="1">
    <citation type="submission" date="2001-01" db="EMBL/GenBank/DDBJ databases">
        <authorList>
            <person name="Renu W."/>
            <person name="Sugihara T."/>
            <person name="Ando H."/>
        </authorList>
    </citation>
    <scope>NUCLEOTIDE SEQUENCE [MRNA] (ISOFORMS 1 AND 2)</scope>
    <source>
        <tissue>Testis</tissue>
    </source>
</reference>
<reference key="2">
    <citation type="journal article" date="2004" name="Genome Res.">
        <title>The status, quality, and expansion of the NIH full-length cDNA project: the Mammalian Gene Collection (MGC).</title>
        <authorList>
            <consortium name="The MGC Project Team"/>
        </authorList>
    </citation>
    <scope>NUCLEOTIDE SEQUENCE [LARGE SCALE MRNA] (ISOFORMS 1 AND 3)</scope>
    <source>
        <tissue>Brain</tissue>
    </source>
</reference>
<reference key="3">
    <citation type="journal article" date="2023" name="Cells">
        <title>Deficiency of the Tmem232 Gene Causes Male Infertility with Morphological Abnormalities of the Sperm Flagellum in Mice.</title>
        <authorList>
            <person name="He X."/>
            <person name="Mu W."/>
            <person name="Wang Z."/>
            <person name="Xu K."/>
            <person name="Yin Y."/>
            <person name="Lu G."/>
            <person name="Chan W.Y."/>
            <person name="Liu H."/>
            <person name="Lv Y."/>
            <person name="Liu S."/>
        </authorList>
    </citation>
    <scope>TISSUE SPECIFICITY</scope>
    <scope>DISRUPTION PHENOTYPE</scope>
    <scope>FUNCTION</scope>
</reference>
<feature type="chain" id="PRO_0000395036" description="Transmembrane protein 232">
    <location>
        <begin position="1"/>
        <end position="675"/>
    </location>
</feature>
<feature type="transmembrane region" description="Helical" evidence="1">
    <location>
        <begin position="163"/>
        <end position="183"/>
    </location>
</feature>
<feature type="region of interest" description="Disordered" evidence="2">
    <location>
        <begin position="605"/>
        <end position="624"/>
    </location>
</feature>
<feature type="coiled-coil region" evidence="1">
    <location>
        <begin position="598"/>
        <end position="634"/>
    </location>
</feature>
<feature type="splice variant" id="VSP_039353" description="In isoform 2." evidence="5">
    <original>KAYKPPVVNKFGVISSTYHEELLKSIFESSNRRKSQKPK</original>
    <variation>TSKKW</variation>
    <location>
        <begin position="2"/>
        <end position="40"/>
    </location>
</feature>
<feature type="splice variant" id="VSP_039354" description="In isoform 3." evidence="4">
    <location>
        <position position="113"/>
    </location>
</feature>
<feature type="sequence conflict" description="In Ref. 1; AAQ14895." evidence="6" ref="1">
    <original>A</original>
    <variation>V</variation>
    <location>
        <position position="3"/>
    </location>
</feature>
<feature type="sequence conflict" description="In Ref. 1; AAQ14894/AAQ14895." evidence="6" ref="1">
    <original>T</original>
    <variation>P</variation>
    <location>
        <position position="95"/>
    </location>
</feature>
<feature type="sequence conflict" description="In Ref. 1; AAQ14894/AAQ14895." evidence="6" ref="1">
    <original>M</original>
    <variation>K</variation>
    <location>
        <position position="463"/>
    </location>
</feature>
<feature type="sequence conflict" description="In Ref. 1; AAQ14894/AAQ14895." evidence="6" ref="1">
    <original>R</original>
    <variation>Q</variation>
    <location>
        <position position="481"/>
    </location>
</feature>
<feature type="sequence conflict" description="In Ref. 1; AAQ14894/AAQ14895." evidence="6" ref="1">
    <original>K</original>
    <variation>E</variation>
    <location>
        <position position="501"/>
    </location>
</feature>
<feature type="sequence conflict" description="In Ref. 1; AAQ14894/AAQ14895." evidence="6" ref="1">
    <original>V</original>
    <variation>M</variation>
    <location>
        <position position="542"/>
    </location>
</feature>
<feature type="sequence conflict" description="In Ref. 1; AAQ14894/AAQ14895." evidence="6" ref="1">
    <original>A</original>
    <variation>S</variation>
    <location>
        <position position="556"/>
    </location>
</feature>
<proteinExistence type="evidence at transcript level"/>
<sequence length="675" mass="78275">MKAYKPPVVNKFGVISSTYHEELLKSIFESSNRRKSQKPKPSFSISKEFILRFNHTDNPAEEEELLEQARRLIVRSKRKLGLKTLGSGKHVHLPTAWAEVIYLAQCKGEIQDEALNMLHASLDHVSFDHDQLPALFFLAESVLYRLCCDAFMKGYLYSVEIKLVKIGYLIFLRLFVFFLHGHLESFKQHLLRLQPYLYALHFSEPSYYKYPNIISNVQFILKTSEIICKRELHSEPFVESPDETEDPYSDLNHLQLNKRGYEVNHLLWHSVAAWSCVQNNRPQLTEVLEHLLFYKTQLQTKCWLDSALALMVLGEAAKLDMACLKTLMDLVTDFLENILSAQNQEENYNIYDTSWASEIVFTYTTIIAEVCLYAATSDLRKTALIGFCACKSPQQGISLTDKSEELPELDGASILTLLKYFSSRISDNCEKVIWIGYYGIVYNLVKMSWELQGEQDQDGLRNMIWQTLQKIKDYEQDPRIRCALVIAQAELNGPSDPFCTKATPNSGEEVFSKYIGWRIATTLSRLFFPSLDVAPPKTPVEVDLPRKHTIRERQPAKKRVLRFILKDHSSVVEVSMTPYPNFFTKADKKLEEIIDHHWQKDMEARKREEEAYKAQNQKDKEEKEKIHFQEIMKQRERKLNKQTKPYEIILSEKESGSEKKCGFFELKPSTAPNAK</sequence>
<evidence type="ECO:0000255" key="1"/>
<evidence type="ECO:0000256" key="2">
    <source>
        <dbReference type="SAM" id="MobiDB-lite"/>
    </source>
</evidence>
<evidence type="ECO:0000269" key="3">
    <source>
    </source>
</evidence>
<evidence type="ECO:0000303" key="4">
    <source>
    </source>
</evidence>
<evidence type="ECO:0000303" key="5">
    <source ref="1"/>
</evidence>
<evidence type="ECO:0000305" key="6"/>
<dbReference type="EMBL" id="AF338468">
    <property type="protein sequence ID" value="AAQ14894.1"/>
    <property type="molecule type" value="mRNA"/>
</dbReference>
<dbReference type="EMBL" id="AF338469">
    <property type="protein sequence ID" value="AAQ14895.1"/>
    <property type="molecule type" value="mRNA"/>
</dbReference>
<dbReference type="EMBL" id="BC150885">
    <property type="protein sequence ID" value="AAI50886.1"/>
    <property type="molecule type" value="mRNA"/>
</dbReference>
<dbReference type="EMBL" id="BC172032">
    <property type="protein sequence ID" value="AAI72032.1"/>
    <property type="molecule type" value="mRNA"/>
</dbReference>
<dbReference type="CCDS" id="CCDS28940.1">
    <molecule id="Q5K6N0-1"/>
</dbReference>
<dbReference type="CCDS" id="CCDS89134.1">
    <molecule id="Q5K6N0-3"/>
</dbReference>
<dbReference type="CCDS" id="CCDS89135.1">
    <molecule id="Q5K6N0-2"/>
</dbReference>
<dbReference type="RefSeq" id="NP_001008973.2">
    <molecule id="Q5K6N0-1"/>
    <property type="nucleotide sequence ID" value="NM_001008973.2"/>
</dbReference>
<dbReference type="RefSeq" id="NP_001276414.1">
    <molecule id="Q5K6N0-1"/>
    <property type="nucleotide sequence ID" value="NM_001289485.1"/>
</dbReference>
<dbReference type="RefSeq" id="NP_001276415.1">
    <molecule id="Q5K6N0-3"/>
    <property type="nucleotide sequence ID" value="NM_001289486.1"/>
</dbReference>
<dbReference type="RefSeq" id="NP_001347114.1">
    <molecule id="Q5K6N0-2"/>
    <property type="nucleotide sequence ID" value="NM_001360185.1"/>
</dbReference>
<dbReference type="RefSeq" id="XP_006524554.1">
    <property type="nucleotide sequence ID" value="XM_006524491.3"/>
</dbReference>
<dbReference type="SMR" id="Q5K6N0"/>
<dbReference type="BioGRID" id="237782">
    <property type="interactions" value="1"/>
</dbReference>
<dbReference type="FunCoup" id="Q5K6N0">
    <property type="interactions" value="4"/>
</dbReference>
<dbReference type="STRING" id="10090.ENSMUSP00000055652"/>
<dbReference type="iPTMnet" id="Q5K6N0"/>
<dbReference type="PhosphoSitePlus" id="Q5K6N0"/>
<dbReference type="PaxDb" id="10090-ENSMUSP00000055652"/>
<dbReference type="ProteomicsDB" id="259409">
    <molecule id="Q5K6N0-1"/>
</dbReference>
<dbReference type="ProteomicsDB" id="259410">
    <molecule id="Q5K6N0-2"/>
</dbReference>
<dbReference type="ProteomicsDB" id="259411">
    <molecule id="Q5K6N0-3"/>
</dbReference>
<dbReference type="Antibodypedia" id="57493">
    <property type="antibodies" value="16 antibodies from 8 providers"/>
</dbReference>
<dbReference type="DNASU" id="381107"/>
<dbReference type="Ensembl" id="ENSMUST00000062161.7">
    <molecule id="Q5K6N0-1"/>
    <property type="protein sequence ID" value="ENSMUSP00000055652.7"/>
    <property type="gene ID" value="ENSMUSG00000045036.16"/>
</dbReference>
<dbReference type="Ensembl" id="ENSMUST00000086722.10">
    <molecule id="Q5K6N0-1"/>
    <property type="protein sequence ID" value="ENSMUSP00000083927.4"/>
    <property type="gene ID" value="ENSMUSG00000045036.16"/>
</dbReference>
<dbReference type="Ensembl" id="ENSMUST00000233117.2">
    <molecule id="Q5K6N0-3"/>
    <property type="protein sequence ID" value="ENSMUSP00000156833.2"/>
    <property type="gene ID" value="ENSMUSG00000045036.16"/>
</dbReference>
<dbReference type="Ensembl" id="ENSMUST00000233738.2">
    <molecule id="Q5K6N0-2"/>
    <property type="protein sequence ID" value="ENSMUSP00000156513.2"/>
    <property type="gene ID" value="ENSMUSG00000045036.16"/>
</dbReference>
<dbReference type="GeneID" id="381107"/>
<dbReference type="KEGG" id="mmu:381107"/>
<dbReference type="UCSC" id="uc008dga.1">
    <molecule id="Q5K6N0-1"/>
    <property type="organism name" value="mouse"/>
</dbReference>
<dbReference type="UCSC" id="uc012awg.1">
    <molecule id="Q5K6N0-3"/>
    <property type="organism name" value="mouse"/>
</dbReference>
<dbReference type="AGR" id="MGI:2685786"/>
<dbReference type="CTD" id="642987"/>
<dbReference type="MGI" id="MGI:2685786">
    <property type="gene designation" value="Tmem232"/>
</dbReference>
<dbReference type="VEuPathDB" id="HostDB:ENSMUSG00000045036"/>
<dbReference type="eggNOG" id="ENOG502QVVE">
    <property type="taxonomic scope" value="Eukaryota"/>
</dbReference>
<dbReference type="GeneTree" id="ENSGT00390000014003"/>
<dbReference type="HOGENOM" id="CLU_015366_1_0_1"/>
<dbReference type="InParanoid" id="Q5K6N0"/>
<dbReference type="OMA" id="DHHWQEE"/>
<dbReference type="OrthoDB" id="10016194at2759"/>
<dbReference type="PhylomeDB" id="Q5K6N0"/>
<dbReference type="TreeFam" id="TF336968"/>
<dbReference type="BioGRID-ORCS" id="381107">
    <property type="hits" value="0 hits in 78 CRISPR screens"/>
</dbReference>
<dbReference type="ChiTaRS" id="Tmem232">
    <property type="organism name" value="mouse"/>
</dbReference>
<dbReference type="PRO" id="PR:Q5K6N0"/>
<dbReference type="Proteomes" id="UP000000589">
    <property type="component" value="Chromosome 17"/>
</dbReference>
<dbReference type="RNAct" id="Q5K6N0">
    <property type="molecule type" value="protein"/>
</dbReference>
<dbReference type="Bgee" id="ENSMUSG00000045036">
    <property type="expression patterns" value="Expressed in dorsal pancreas and 46 other cell types or tissues"/>
</dbReference>
<dbReference type="ExpressionAtlas" id="Q5K6N0">
    <property type="expression patterns" value="baseline and differential"/>
</dbReference>
<dbReference type="GO" id="GO:0016020">
    <property type="term" value="C:membrane"/>
    <property type="evidence" value="ECO:0007669"/>
    <property type="project" value="UniProtKB-SubCell"/>
</dbReference>
<dbReference type="GO" id="GO:0001520">
    <property type="term" value="C:outer dense fiber"/>
    <property type="evidence" value="ECO:0000353"/>
    <property type="project" value="MGI"/>
</dbReference>
<dbReference type="GO" id="GO:0030030">
    <property type="term" value="P:cell projection organization"/>
    <property type="evidence" value="ECO:0007669"/>
    <property type="project" value="UniProtKB-KW"/>
</dbReference>
<dbReference type="GO" id="GO:0030317">
    <property type="term" value="P:flagellated sperm motility"/>
    <property type="evidence" value="ECO:0000315"/>
    <property type="project" value="UniProtKB"/>
</dbReference>
<dbReference type="GO" id="GO:0098544">
    <property type="term" value="P:maintenance of protein complex location"/>
    <property type="evidence" value="ECO:0000315"/>
    <property type="project" value="MGI"/>
</dbReference>
<dbReference type="GO" id="GO:0160087">
    <property type="term" value="P:spermatid cytoplasm removal during spermiation of flagellated sperm"/>
    <property type="evidence" value="ECO:0000315"/>
    <property type="project" value="MGI"/>
</dbReference>
<dbReference type="GO" id="GO:0007283">
    <property type="term" value="P:spermatogenesis"/>
    <property type="evidence" value="ECO:0000315"/>
    <property type="project" value="UniProtKB"/>
</dbReference>
<dbReference type="InterPro" id="IPR031747">
    <property type="entry name" value="TMEM232"/>
</dbReference>
<dbReference type="PANTHER" id="PTHR28651">
    <property type="entry name" value="TRANSMEMBRANE PROTEIN 232"/>
    <property type="match status" value="1"/>
</dbReference>
<dbReference type="PANTHER" id="PTHR28651:SF1">
    <property type="entry name" value="TRANSMEMBRANE PROTEIN 232"/>
    <property type="match status" value="1"/>
</dbReference>
<dbReference type="Pfam" id="PF15877">
    <property type="entry name" value="TMEM232"/>
    <property type="match status" value="1"/>
</dbReference>
<gene>
    <name type="primary">Tmem232</name>
    <name type="synonym">Tes13</name>
</gene>
<protein>
    <recommendedName>
        <fullName>Transmembrane protein 232</fullName>
    </recommendedName>
    <alternativeName>
        <fullName>Testis-specific protein 13</fullName>
    </alternativeName>
</protein>
<accession>Q5K6N0</accession>
<accession>B2RX35</accession>
<accession>B7ZWG2</accession>
<accession>Q5K6N1</accession>
<keyword id="KW-0025">Alternative splicing</keyword>
<keyword id="KW-0970">Cilium biogenesis/degradation</keyword>
<keyword id="KW-0175">Coiled coil</keyword>
<keyword id="KW-0472">Membrane</keyword>
<keyword id="KW-1185">Reference proteome</keyword>
<keyword id="KW-0812">Transmembrane</keyword>
<keyword id="KW-1133">Transmembrane helix</keyword>
<organism>
    <name type="scientific">Mus musculus</name>
    <name type="common">Mouse</name>
    <dbReference type="NCBI Taxonomy" id="10090"/>
    <lineage>
        <taxon>Eukaryota</taxon>
        <taxon>Metazoa</taxon>
        <taxon>Chordata</taxon>
        <taxon>Craniata</taxon>
        <taxon>Vertebrata</taxon>
        <taxon>Euteleostomi</taxon>
        <taxon>Mammalia</taxon>
        <taxon>Eutheria</taxon>
        <taxon>Euarchontoglires</taxon>
        <taxon>Glires</taxon>
        <taxon>Rodentia</taxon>
        <taxon>Myomorpha</taxon>
        <taxon>Muroidea</taxon>
        <taxon>Muridae</taxon>
        <taxon>Murinae</taxon>
        <taxon>Mus</taxon>
        <taxon>Mus</taxon>
    </lineage>
</organism>
<name>TM232_MOUSE</name>
<comment type="function">
    <text evidence="3">Plays a critical role for male fertility and sperm motility by regulating sperm cytoplasm removal and maintaining axoneme integrity.</text>
</comment>
<comment type="subcellular location">
    <subcellularLocation>
        <location evidence="6">Membrane</location>
        <topology evidence="6">Single-pass membrane protein</topology>
    </subcellularLocation>
</comment>
<comment type="alternative products">
    <event type="alternative splicing"/>
    <isoform>
        <id>Q5K6N0-1</id>
        <name>1</name>
        <name>Tes13-L</name>
        <sequence type="displayed"/>
    </isoform>
    <isoform>
        <id>Q5K6N0-2</id>
        <name>2</name>
        <name>Tes13-S</name>
        <sequence type="described" ref="VSP_039353"/>
    </isoform>
    <isoform>
        <id>Q5K6N0-3</id>
        <name>3</name>
        <sequence type="described" ref="VSP_039354"/>
    </isoform>
</comment>
<comment type="tissue specificity">
    <text evidence="3">High expression in the testis and weak expression levels in the spleen, liver, brain, uterus, lung, epididymis and kidney. Not detected in the heart or ovary.</text>
</comment>
<comment type="disruption phenotype">
    <text evidence="3">Deficient mice are viable and display no apparent abnormalities. However male mice are infertile. Mice display an abnormal sperm flagellum morphology. Furthermore, mice have low sperm motility and decreased total sperm count. The sperm flagella of deficient mice have abnormalities in the cytoplasm removal and the flagella axoneme lacks microtubule doublet 7 and the corresponding ODF.</text>
</comment>